<proteinExistence type="inferred from homology"/>
<feature type="signal peptide" evidence="1">
    <location>
        <begin position="1"/>
        <end position="18"/>
    </location>
</feature>
<feature type="chain" id="PRO_1000138277" description="LPS-assembly lipoprotein LptE">
    <location>
        <begin position="19"/>
        <end position="196"/>
    </location>
</feature>
<feature type="region of interest" description="Disordered" evidence="2">
    <location>
        <begin position="171"/>
        <end position="196"/>
    </location>
</feature>
<feature type="lipid moiety-binding region" description="N-palmitoyl cysteine" evidence="1">
    <location>
        <position position="19"/>
    </location>
</feature>
<feature type="lipid moiety-binding region" description="S-diacylglycerol cysteine" evidence="1">
    <location>
        <position position="19"/>
    </location>
</feature>
<reference key="1">
    <citation type="journal article" date="2008" name="Genome Res.">
        <title>Comparative genome analysis of Salmonella enteritidis PT4 and Salmonella gallinarum 287/91 provides insights into evolutionary and host adaptation pathways.</title>
        <authorList>
            <person name="Thomson N.R."/>
            <person name="Clayton D.J."/>
            <person name="Windhorst D."/>
            <person name="Vernikos G."/>
            <person name="Davidson S."/>
            <person name="Churcher C."/>
            <person name="Quail M.A."/>
            <person name="Stevens M."/>
            <person name="Jones M.A."/>
            <person name="Watson M."/>
            <person name="Barron A."/>
            <person name="Layton A."/>
            <person name="Pickard D."/>
            <person name="Kingsley R.A."/>
            <person name="Bignell A."/>
            <person name="Clark L."/>
            <person name="Harris B."/>
            <person name="Ormond D."/>
            <person name="Abdellah Z."/>
            <person name="Brooks K."/>
            <person name="Cherevach I."/>
            <person name="Chillingworth T."/>
            <person name="Woodward J."/>
            <person name="Norberczak H."/>
            <person name="Lord A."/>
            <person name="Arrowsmith C."/>
            <person name="Jagels K."/>
            <person name="Moule S."/>
            <person name="Mungall K."/>
            <person name="Saunders M."/>
            <person name="Whitehead S."/>
            <person name="Chabalgoity J.A."/>
            <person name="Maskell D."/>
            <person name="Humphreys T."/>
            <person name="Roberts M."/>
            <person name="Barrow P.A."/>
            <person name="Dougan G."/>
            <person name="Parkhill J."/>
        </authorList>
    </citation>
    <scope>NUCLEOTIDE SEQUENCE [LARGE SCALE GENOMIC DNA]</scope>
    <source>
        <strain>287/91 / NCTC 13346</strain>
    </source>
</reference>
<name>LPTE_SALG2</name>
<sequence length="196" mass="21431">MRYLVTLLLSLAVLVTAGCGWHLRSTTQVPASMKTMILDSGDPNGPLSRAVRNQLRLNNVNLLDKDTTRKDVPSLRLGTVTISQDTASVFQDGQTAEYQMVMTVNASVLIPGHDIYPISTKVYRSFFDNPQMALAKDNEQAMIVQEMYDKAAEQLIRKLTSVRAADIQATKEEATADNETAAPASTPARVSTTLSN</sequence>
<dbReference type="EMBL" id="AM933173">
    <property type="protein sequence ID" value="CAR36547.1"/>
    <property type="molecule type" value="Genomic_DNA"/>
</dbReference>
<dbReference type="RefSeq" id="WP_001269950.1">
    <property type="nucleotide sequence ID" value="NC_011274.1"/>
</dbReference>
<dbReference type="SMR" id="B5R7Z5"/>
<dbReference type="KEGG" id="seg:SG0651"/>
<dbReference type="HOGENOM" id="CLU_103309_1_1_6"/>
<dbReference type="Proteomes" id="UP000008321">
    <property type="component" value="Chromosome"/>
</dbReference>
<dbReference type="GO" id="GO:0009279">
    <property type="term" value="C:cell outer membrane"/>
    <property type="evidence" value="ECO:0007669"/>
    <property type="project" value="UniProtKB-SubCell"/>
</dbReference>
<dbReference type="GO" id="GO:1990351">
    <property type="term" value="C:transporter complex"/>
    <property type="evidence" value="ECO:0007669"/>
    <property type="project" value="TreeGrafter"/>
</dbReference>
<dbReference type="GO" id="GO:0001530">
    <property type="term" value="F:lipopolysaccharide binding"/>
    <property type="evidence" value="ECO:0007669"/>
    <property type="project" value="TreeGrafter"/>
</dbReference>
<dbReference type="GO" id="GO:0043165">
    <property type="term" value="P:Gram-negative-bacterium-type cell outer membrane assembly"/>
    <property type="evidence" value="ECO:0007669"/>
    <property type="project" value="UniProtKB-UniRule"/>
</dbReference>
<dbReference type="GO" id="GO:0015920">
    <property type="term" value="P:lipopolysaccharide transport"/>
    <property type="evidence" value="ECO:0007669"/>
    <property type="project" value="TreeGrafter"/>
</dbReference>
<dbReference type="FunFam" id="3.30.160.150:FF:000001">
    <property type="entry name" value="LPS-assembly lipoprotein LptE"/>
    <property type="match status" value="1"/>
</dbReference>
<dbReference type="Gene3D" id="3.30.160.150">
    <property type="entry name" value="Lipoprotein like domain"/>
    <property type="match status" value="1"/>
</dbReference>
<dbReference type="HAMAP" id="MF_01186">
    <property type="entry name" value="LPS_assembly_LptE"/>
    <property type="match status" value="1"/>
</dbReference>
<dbReference type="InterPro" id="IPR007485">
    <property type="entry name" value="LPS_assembly_LptE"/>
</dbReference>
<dbReference type="NCBIfam" id="NF008062">
    <property type="entry name" value="PRK10796.1"/>
    <property type="match status" value="1"/>
</dbReference>
<dbReference type="PANTHER" id="PTHR38098">
    <property type="entry name" value="LPS-ASSEMBLY LIPOPROTEIN LPTE"/>
    <property type="match status" value="1"/>
</dbReference>
<dbReference type="PANTHER" id="PTHR38098:SF1">
    <property type="entry name" value="LPS-ASSEMBLY LIPOPROTEIN LPTE"/>
    <property type="match status" value="1"/>
</dbReference>
<dbReference type="Pfam" id="PF04390">
    <property type="entry name" value="LptE"/>
    <property type="match status" value="1"/>
</dbReference>
<dbReference type="PROSITE" id="PS51257">
    <property type="entry name" value="PROKAR_LIPOPROTEIN"/>
    <property type="match status" value="1"/>
</dbReference>
<evidence type="ECO:0000255" key="1">
    <source>
        <dbReference type="HAMAP-Rule" id="MF_01186"/>
    </source>
</evidence>
<evidence type="ECO:0000256" key="2">
    <source>
        <dbReference type="SAM" id="MobiDB-lite"/>
    </source>
</evidence>
<protein>
    <recommendedName>
        <fullName evidence="1">LPS-assembly lipoprotein LptE</fullName>
    </recommendedName>
</protein>
<keyword id="KW-0998">Cell outer membrane</keyword>
<keyword id="KW-0449">Lipoprotein</keyword>
<keyword id="KW-0472">Membrane</keyword>
<keyword id="KW-0564">Palmitate</keyword>
<keyword id="KW-0732">Signal</keyword>
<gene>
    <name evidence="1" type="primary">lptE</name>
    <name type="synonym">rlpB</name>
    <name type="ordered locus">SG0651</name>
</gene>
<accession>B5R7Z5</accession>
<comment type="function">
    <text evidence="1">Together with LptD, is involved in the assembly of lipopolysaccharide (LPS) at the surface of the outer membrane. Required for the proper assembly of LptD. Binds LPS and may serve as the LPS recognition site at the outer membrane.</text>
</comment>
<comment type="subunit">
    <text evidence="1">Component of the lipopolysaccharide transport and assembly complex. Interacts with LptD.</text>
</comment>
<comment type="subcellular location">
    <subcellularLocation>
        <location evidence="1">Cell outer membrane</location>
        <topology evidence="1">Lipid-anchor</topology>
    </subcellularLocation>
</comment>
<comment type="similarity">
    <text evidence="1">Belongs to the LptE lipoprotein family.</text>
</comment>
<organism>
    <name type="scientific">Salmonella gallinarum (strain 287/91 / NCTC 13346)</name>
    <dbReference type="NCBI Taxonomy" id="550538"/>
    <lineage>
        <taxon>Bacteria</taxon>
        <taxon>Pseudomonadati</taxon>
        <taxon>Pseudomonadota</taxon>
        <taxon>Gammaproteobacteria</taxon>
        <taxon>Enterobacterales</taxon>
        <taxon>Enterobacteriaceae</taxon>
        <taxon>Salmonella</taxon>
    </lineage>
</organism>